<comment type="function">
    <text evidence="1">IGPS catalyzes the conversion of PRFAR and glutamine to IGP, AICAR and glutamate. The HisF subunit catalyzes the cyclization activity that produces IGP and AICAR from PRFAR using the ammonia provided by the HisH subunit.</text>
</comment>
<comment type="catalytic activity">
    <reaction evidence="1">
        <text>5-[(5-phospho-1-deoxy-D-ribulos-1-ylimino)methylamino]-1-(5-phospho-beta-D-ribosyl)imidazole-4-carboxamide + L-glutamine = D-erythro-1-(imidazol-4-yl)glycerol 3-phosphate + 5-amino-1-(5-phospho-beta-D-ribosyl)imidazole-4-carboxamide + L-glutamate + H(+)</text>
        <dbReference type="Rhea" id="RHEA:24793"/>
        <dbReference type="ChEBI" id="CHEBI:15378"/>
        <dbReference type="ChEBI" id="CHEBI:29985"/>
        <dbReference type="ChEBI" id="CHEBI:58278"/>
        <dbReference type="ChEBI" id="CHEBI:58359"/>
        <dbReference type="ChEBI" id="CHEBI:58475"/>
        <dbReference type="ChEBI" id="CHEBI:58525"/>
        <dbReference type="EC" id="4.3.2.10"/>
    </reaction>
</comment>
<comment type="pathway">
    <text evidence="1">Amino-acid biosynthesis; L-histidine biosynthesis; L-histidine from 5-phospho-alpha-D-ribose 1-diphosphate: step 5/9.</text>
</comment>
<comment type="subunit">
    <text evidence="1">Heterodimer of HisH and HisF.</text>
</comment>
<comment type="subcellular location">
    <subcellularLocation>
        <location evidence="1">Cytoplasm</location>
    </subcellularLocation>
</comment>
<comment type="similarity">
    <text evidence="1">Belongs to the HisA/HisF family.</text>
</comment>
<dbReference type="EC" id="4.3.2.10" evidence="1"/>
<dbReference type="EMBL" id="AM408590">
    <property type="protein sequence ID" value="CAL71630.1"/>
    <property type="molecule type" value="Genomic_DNA"/>
</dbReference>
<dbReference type="RefSeq" id="WP_003407959.1">
    <property type="nucleotide sequence ID" value="NC_008769.1"/>
</dbReference>
<dbReference type="SMR" id="A1KJ21"/>
<dbReference type="KEGG" id="mbb:BCG_1643"/>
<dbReference type="HOGENOM" id="CLU_048577_4_0_11"/>
<dbReference type="UniPathway" id="UPA00031">
    <property type="reaction ID" value="UER00010"/>
</dbReference>
<dbReference type="Proteomes" id="UP000001472">
    <property type="component" value="Chromosome"/>
</dbReference>
<dbReference type="GO" id="GO:0005737">
    <property type="term" value="C:cytoplasm"/>
    <property type="evidence" value="ECO:0007669"/>
    <property type="project" value="UniProtKB-SubCell"/>
</dbReference>
<dbReference type="GO" id="GO:0000107">
    <property type="term" value="F:imidazoleglycerol-phosphate synthase activity"/>
    <property type="evidence" value="ECO:0007669"/>
    <property type="project" value="UniProtKB-UniRule"/>
</dbReference>
<dbReference type="GO" id="GO:0016829">
    <property type="term" value="F:lyase activity"/>
    <property type="evidence" value="ECO:0007669"/>
    <property type="project" value="UniProtKB-KW"/>
</dbReference>
<dbReference type="GO" id="GO:0000105">
    <property type="term" value="P:L-histidine biosynthetic process"/>
    <property type="evidence" value="ECO:0007669"/>
    <property type="project" value="UniProtKB-UniRule"/>
</dbReference>
<dbReference type="CDD" id="cd04731">
    <property type="entry name" value="HisF"/>
    <property type="match status" value="1"/>
</dbReference>
<dbReference type="FunFam" id="3.20.20.70:FF:000006">
    <property type="entry name" value="Imidazole glycerol phosphate synthase subunit HisF"/>
    <property type="match status" value="1"/>
</dbReference>
<dbReference type="Gene3D" id="3.20.20.70">
    <property type="entry name" value="Aldolase class I"/>
    <property type="match status" value="1"/>
</dbReference>
<dbReference type="HAMAP" id="MF_01013">
    <property type="entry name" value="HisF"/>
    <property type="match status" value="1"/>
</dbReference>
<dbReference type="InterPro" id="IPR013785">
    <property type="entry name" value="Aldolase_TIM"/>
</dbReference>
<dbReference type="InterPro" id="IPR006062">
    <property type="entry name" value="His_biosynth"/>
</dbReference>
<dbReference type="InterPro" id="IPR004651">
    <property type="entry name" value="HisF"/>
</dbReference>
<dbReference type="InterPro" id="IPR050064">
    <property type="entry name" value="IGPS_HisA/HisF"/>
</dbReference>
<dbReference type="InterPro" id="IPR011060">
    <property type="entry name" value="RibuloseP-bd_barrel"/>
</dbReference>
<dbReference type="NCBIfam" id="TIGR00735">
    <property type="entry name" value="hisF"/>
    <property type="match status" value="1"/>
</dbReference>
<dbReference type="PANTHER" id="PTHR21235:SF2">
    <property type="entry name" value="IMIDAZOLE GLYCEROL PHOSPHATE SYNTHASE HISHF"/>
    <property type="match status" value="1"/>
</dbReference>
<dbReference type="PANTHER" id="PTHR21235">
    <property type="entry name" value="IMIDAZOLE GLYCEROL PHOSPHATE SYNTHASE SUBUNIT HISF/H IGP SYNTHASE SUBUNIT HISF/H"/>
    <property type="match status" value="1"/>
</dbReference>
<dbReference type="Pfam" id="PF00977">
    <property type="entry name" value="His_biosynth"/>
    <property type="match status" value="1"/>
</dbReference>
<dbReference type="SUPFAM" id="SSF51366">
    <property type="entry name" value="Ribulose-phoshate binding barrel"/>
    <property type="match status" value="1"/>
</dbReference>
<accession>A1KJ21</accession>
<feature type="chain" id="PRO_1000063093" description="Imidazole glycerol phosphate synthase subunit HisF">
    <location>
        <begin position="1"/>
        <end position="267"/>
    </location>
</feature>
<feature type="active site" evidence="1">
    <location>
        <position position="22"/>
    </location>
</feature>
<feature type="active site" evidence="1">
    <location>
        <position position="141"/>
    </location>
</feature>
<gene>
    <name evidence="1" type="primary">hisF</name>
    <name type="ordered locus">BCG_1643</name>
</gene>
<evidence type="ECO:0000255" key="1">
    <source>
        <dbReference type="HAMAP-Rule" id="MF_01013"/>
    </source>
</evidence>
<reference key="1">
    <citation type="journal article" date="2007" name="Proc. Natl. Acad. Sci. U.S.A.">
        <title>Genome plasticity of BCG and impact on vaccine efficacy.</title>
        <authorList>
            <person name="Brosch R."/>
            <person name="Gordon S.V."/>
            <person name="Garnier T."/>
            <person name="Eiglmeier K."/>
            <person name="Frigui W."/>
            <person name="Valenti P."/>
            <person name="Dos Santos S."/>
            <person name="Duthoy S."/>
            <person name="Lacroix C."/>
            <person name="Garcia-Pelayo C."/>
            <person name="Inwald J.K."/>
            <person name="Golby P."/>
            <person name="Garcia J.N."/>
            <person name="Hewinson R.G."/>
            <person name="Behr M.A."/>
            <person name="Quail M.A."/>
            <person name="Churcher C."/>
            <person name="Barrell B.G."/>
            <person name="Parkhill J."/>
            <person name="Cole S.T."/>
        </authorList>
    </citation>
    <scope>NUCLEOTIDE SEQUENCE [LARGE SCALE GENOMIC DNA]</scope>
    <source>
        <strain>BCG / Pasteur 1173P2</strain>
    </source>
</reference>
<organism>
    <name type="scientific">Mycobacterium bovis (strain BCG / Pasteur 1173P2)</name>
    <dbReference type="NCBI Taxonomy" id="410289"/>
    <lineage>
        <taxon>Bacteria</taxon>
        <taxon>Bacillati</taxon>
        <taxon>Actinomycetota</taxon>
        <taxon>Actinomycetes</taxon>
        <taxon>Mycobacteriales</taxon>
        <taxon>Mycobacteriaceae</taxon>
        <taxon>Mycobacterium</taxon>
        <taxon>Mycobacterium tuberculosis complex</taxon>
    </lineage>
</organism>
<proteinExistence type="inferred from homology"/>
<name>HIS6_MYCBP</name>
<sequence length="267" mass="27237">MYADRDLPGAGGLAVRVIPCLDVDDGRVVKGVNFENLRDAGDPVELAAVYDAEGADELTFLDVTASSSGRATMLEVVRRTAEQVFIPLTVGGGVRTVADVDSLLRAGADKVAVNTAAIACLDLLADMARQFGSQCIVLSVDARTVPVGSAPTPSGWEVTTHGGRRGTGMDAVQWAARGADLGVGEILLNSMDADGTKAGFDLALLRAVRAAVTVPVIASGGAGAVEHFAPAVAAGADAVLAASVFHFRELTIGQVKAALAAEGITVR</sequence>
<protein>
    <recommendedName>
        <fullName evidence="1">Imidazole glycerol phosphate synthase subunit HisF</fullName>
        <ecNumber evidence="1">4.3.2.10</ecNumber>
    </recommendedName>
    <alternativeName>
        <fullName evidence="1">IGP synthase cyclase subunit</fullName>
    </alternativeName>
    <alternativeName>
        <fullName evidence="1">IGP synthase subunit HisF</fullName>
    </alternativeName>
    <alternativeName>
        <fullName evidence="1">ImGP synthase subunit HisF</fullName>
        <shortName evidence="1">IGPS subunit HisF</shortName>
    </alternativeName>
</protein>
<keyword id="KW-0028">Amino-acid biosynthesis</keyword>
<keyword id="KW-0963">Cytoplasm</keyword>
<keyword id="KW-0368">Histidine biosynthesis</keyword>
<keyword id="KW-0456">Lyase</keyword>